<comment type="function">
    <text evidence="1">Exhibits a very high intrinsic GTPase hydrolysis rate. Involved in the addition of a carboxymethylaminomethyl (cmnm) group at the wobble position (U34) of certain tRNAs, forming tRNA-cmnm(5)s(2)U34.</text>
</comment>
<comment type="cofactor">
    <cofactor evidence="1">
        <name>K(+)</name>
        <dbReference type="ChEBI" id="CHEBI:29103"/>
    </cofactor>
    <text evidence="1">Binds 1 potassium ion per subunit.</text>
</comment>
<comment type="subunit">
    <text evidence="1">Homodimer. Heterotetramer of two MnmE and two MnmG subunits.</text>
</comment>
<comment type="subcellular location">
    <subcellularLocation>
        <location evidence="1">Cytoplasm</location>
    </subcellularLocation>
</comment>
<comment type="similarity">
    <text evidence="1">Belongs to the TRAFAC class TrmE-Era-EngA-EngB-Septin-like GTPase superfamily. TrmE GTPase family.</text>
</comment>
<name>MNME_RHIJ3</name>
<protein>
    <recommendedName>
        <fullName evidence="1">tRNA modification GTPase MnmE</fullName>
        <ecNumber evidence="1">3.6.-.-</ecNumber>
    </recommendedName>
</protein>
<feature type="chain" id="PRO_0000345883" description="tRNA modification GTPase MnmE">
    <location>
        <begin position="1"/>
        <end position="439"/>
    </location>
</feature>
<feature type="domain" description="TrmE-type G">
    <location>
        <begin position="218"/>
        <end position="363"/>
    </location>
</feature>
<feature type="binding site" evidence="1">
    <location>
        <position position="24"/>
    </location>
    <ligand>
        <name>(6S)-5-formyl-5,6,7,8-tetrahydrofolate</name>
        <dbReference type="ChEBI" id="CHEBI:57457"/>
    </ligand>
</feature>
<feature type="binding site" evidence="1">
    <location>
        <position position="81"/>
    </location>
    <ligand>
        <name>(6S)-5-formyl-5,6,7,8-tetrahydrofolate</name>
        <dbReference type="ChEBI" id="CHEBI:57457"/>
    </ligand>
</feature>
<feature type="binding site" evidence="1">
    <location>
        <position position="121"/>
    </location>
    <ligand>
        <name>(6S)-5-formyl-5,6,7,8-tetrahydrofolate</name>
        <dbReference type="ChEBI" id="CHEBI:57457"/>
    </ligand>
</feature>
<feature type="binding site" evidence="1">
    <location>
        <begin position="228"/>
        <end position="233"/>
    </location>
    <ligand>
        <name>GTP</name>
        <dbReference type="ChEBI" id="CHEBI:37565"/>
    </ligand>
</feature>
<feature type="binding site" evidence="1">
    <location>
        <position position="228"/>
    </location>
    <ligand>
        <name>K(+)</name>
        <dbReference type="ChEBI" id="CHEBI:29103"/>
    </ligand>
</feature>
<feature type="binding site" evidence="1">
    <location>
        <position position="232"/>
    </location>
    <ligand>
        <name>Mg(2+)</name>
        <dbReference type="ChEBI" id="CHEBI:18420"/>
    </ligand>
</feature>
<feature type="binding site" evidence="1">
    <location>
        <begin position="247"/>
        <end position="253"/>
    </location>
    <ligand>
        <name>GTP</name>
        <dbReference type="ChEBI" id="CHEBI:37565"/>
    </ligand>
</feature>
<feature type="binding site" evidence="1">
    <location>
        <position position="247"/>
    </location>
    <ligand>
        <name>K(+)</name>
        <dbReference type="ChEBI" id="CHEBI:29103"/>
    </ligand>
</feature>
<feature type="binding site" evidence="1">
    <location>
        <position position="249"/>
    </location>
    <ligand>
        <name>K(+)</name>
        <dbReference type="ChEBI" id="CHEBI:29103"/>
    </ligand>
</feature>
<feature type="binding site" evidence="1">
    <location>
        <position position="252"/>
    </location>
    <ligand>
        <name>K(+)</name>
        <dbReference type="ChEBI" id="CHEBI:29103"/>
    </ligand>
</feature>
<feature type="binding site" evidence="1">
    <location>
        <position position="253"/>
    </location>
    <ligand>
        <name>Mg(2+)</name>
        <dbReference type="ChEBI" id="CHEBI:18420"/>
    </ligand>
</feature>
<feature type="binding site" evidence="1">
    <location>
        <begin position="272"/>
        <end position="275"/>
    </location>
    <ligand>
        <name>GTP</name>
        <dbReference type="ChEBI" id="CHEBI:37565"/>
    </ligand>
</feature>
<feature type="binding site" evidence="1">
    <location>
        <position position="439"/>
    </location>
    <ligand>
        <name>(6S)-5-formyl-5,6,7,8-tetrahydrofolate</name>
        <dbReference type="ChEBI" id="CHEBI:57457"/>
    </ligand>
</feature>
<evidence type="ECO:0000255" key="1">
    <source>
        <dbReference type="HAMAP-Rule" id="MF_00379"/>
    </source>
</evidence>
<sequence length="439" mass="47342">MAMLSDTIYALSSGAPPSGVSVVRVSGPLTRDILVKLVGSVPAARHVSHRTIRTRNNQPIDSGLVLFFPAPNSFTGEDVAELQIHGSRAVLAALFHALGDIPGVRMAVEGEFSRRAFENGKLDLVEVEGLADLIGAETEMQRRLAVEHSAGGLSAIYDSWAERLTRARALVEAELDFPEEDDVPGSVSDAVWADMAKLRSDIGDHLAAASAGEIIRDGFKVVIAGAPNAGKSSLLNALARRDVAIVTEIAGTTRDVLQVDLDIDGYLIKLFDTAGLREADDKVEMEGVRRARVALRDADLVLLLVDMTKPLIPDDLEQSSPHVTVGTKKDLTEVNSGRYDLQISTATGDGLPELRRLIGDIVERRFAGLSMAIPSRQRHKDSLAKCLAALDVALSQTDVNLELRTEQLRIAAEYLGRITGRVDVEQLLGVIFSEFCIGK</sequence>
<reference key="1">
    <citation type="journal article" date="2006" name="Genome Biol.">
        <title>The genome of Rhizobium leguminosarum has recognizable core and accessory components.</title>
        <authorList>
            <person name="Young J.P.W."/>
            <person name="Crossman L.C."/>
            <person name="Johnston A.W.B."/>
            <person name="Thomson N.R."/>
            <person name="Ghazoui Z.F."/>
            <person name="Hull K.H."/>
            <person name="Wexler M."/>
            <person name="Curson A.R.J."/>
            <person name="Todd J.D."/>
            <person name="Poole P.S."/>
            <person name="Mauchline T.H."/>
            <person name="East A.K."/>
            <person name="Quail M.A."/>
            <person name="Churcher C."/>
            <person name="Arrowsmith C."/>
            <person name="Cherevach I."/>
            <person name="Chillingworth T."/>
            <person name="Clarke K."/>
            <person name="Cronin A."/>
            <person name="Davis P."/>
            <person name="Fraser A."/>
            <person name="Hance Z."/>
            <person name="Hauser H."/>
            <person name="Jagels K."/>
            <person name="Moule S."/>
            <person name="Mungall K."/>
            <person name="Norbertczak H."/>
            <person name="Rabbinowitsch E."/>
            <person name="Sanders M."/>
            <person name="Simmonds M."/>
            <person name="Whitehead S."/>
            <person name="Parkhill J."/>
        </authorList>
    </citation>
    <scope>NUCLEOTIDE SEQUENCE [LARGE SCALE GENOMIC DNA]</scope>
    <source>
        <strain>DSM 114642 / LMG 32736 / 3841</strain>
    </source>
</reference>
<proteinExistence type="inferred from homology"/>
<dbReference type="EC" id="3.6.-.-" evidence="1"/>
<dbReference type="EMBL" id="AM236080">
    <property type="protein sequence ID" value="CAK10222.1"/>
    <property type="molecule type" value="Genomic_DNA"/>
</dbReference>
<dbReference type="RefSeq" id="WP_011654068.1">
    <property type="nucleotide sequence ID" value="NC_008380.1"/>
</dbReference>
<dbReference type="SMR" id="Q1MA18"/>
<dbReference type="EnsemblBacteria" id="CAK10222">
    <property type="protein sequence ID" value="CAK10222"/>
    <property type="gene ID" value="RL4739"/>
</dbReference>
<dbReference type="KEGG" id="rle:RL4739"/>
<dbReference type="eggNOG" id="COG0486">
    <property type="taxonomic scope" value="Bacteria"/>
</dbReference>
<dbReference type="HOGENOM" id="CLU_019624_3_1_5"/>
<dbReference type="Proteomes" id="UP000006575">
    <property type="component" value="Chromosome"/>
</dbReference>
<dbReference type="GO" id="GO:0005737">
    <property type="term" value="C:cytoplasm"/>
    <property type="evidence" value="ECO:0007669"/>
    <property type="project" value="UniProtKB-SubCell"/>
</dbReference>
<dbReference type="GO" id="GO:0005525">
    <property type="term" value="F:GTP binding"/>
    <property type="evidence" value="ECO:0007669"/>
    <property type="project" value="UniProtKB-UniRule"/>
</dbReference>
<dbReference type="GO" id="GO:0003924">
    <property type="term" value="F:GTPase activity"/>
    <property type="evidence" value="ECO:0007669"/>
    <property type="project" value="UniProtKB-UniRule"/>
</dbReference>
<dbReference type="GO" id="GO:0046872">
    <property type="term" value="F:metal ion binding"/>
    <property type="evidence" value="ECO:0007669"/>
    <property type="project" value="UniProtKB-KW"/>
</dbReference>
<dbReference type="GO" id="GO:0030488">
    <property type="term" value="P:tRNA methylation"/>
    <property type="evidence" value="ECO:0007669"/>
    <property type="project" value="TreeGrafter"/>
</dbReference>
<dbReference type="GO" id="GO:0002098">
    <property type="term" value="P:tRNA wobble uridine modification"/>
    <property type="evidence" value="ECO:0007669"/>
    <property type="project" value="TreeGrafter"/>
</dbReference>
<dbReference type="CDD" id="cd04164">
    <property type="entry name" value="trmE"/>
    <property type="match status" value="1"/>
</dbReference>
<dbReference type="CDD" id="cd14858">
    <property type="entry name" value="TrmE_N"/>
    <property type="match status" value="1"/>
</dbReference>
<dbReference type="FunFam" id="3.30.1360.120:FF:000007">
    <property type="entry name" value="tRNA modification GTPase GTPBP3, mitochondrial"/>
    <property type="match status" value="1"/>
</dbReference>
<dbReference type="Gene3D" id="3.40.50.300">
    <property type="entry name" value="P-loop containing nucleotide triphosphate hydrolases"/>
    <property type="match status" value="1"/>
</dbReference>
<dbReference type="Gene3D" id="3.30.1360.120">
    <property type="entry name" value="Probable tRNA modification gtpase trme, domain 1"/>
    <property type="match status" value="1"/>
</dbReference>
<dbReference type="Gene3D" id="1.20.120.430">
    <property type="entry name" value="tRNA modification GTPase MnmE domain 2"/>
    <property type="match status" value="1"/>
</dbReference>
<dbReference type="HAMAP" id="MF_00379">
    <property type="entry name" value="GTPase_MnmE"/>
    <property type="match status" value="1"/>
</dbReference>
<dbReference type="InterPro" id="IPR031168">
    <property type="entry name" value="G_TrmE"/>
</dbReference>
<dbReference type="InterPro" id="IPR006073">
    <property type="entry name" value="GTP-bd"/>
</dbReference>
<dbReference type="InterPro" id="IPR018948">
    <property type="entry name" value="GTP-bd_TrmE_N"/>
</dbReference>
<dbReference type="InterPro" id="IPR004520">
    <property type="entry name" value="GTPase_MnmE"/>
</dbReference>
<dbReference type="InterPro" id="IPR027368">
    <property type="entry name" value="MnmE_dom2"/>
</dbReference>
<dbReference type="InterPro" id="IPR025867">
    <property type="entry name" value="MnmE_helical"/>
</dbReference>
<dbReference type="InterPro" id="IPR027417">
    <property type="entry name" value="P-loop_NTPase"/>
</dbReference>
<dbReference type="InterPro" id="IPR005225">
    <property type="entry name" value="Small_GTP-bd"/>
</dbReference>
<dbReference type="InterPro" id="IPR027266">
    <property type="entry name" value="TrmE/GcvT_dom1"/>
</dbReference>
<dbReference type="NCBIfam" id="TIGR00450">
    <property type="entry name" value="mnmE_trmE_thdF"/>
    <property type="match status" value="1"/>
</dbReference>
<dbReference type="NCBIfam" id="NF003661">
    <property type="entry name" value="PRK05291.1-3"/>
    <property type="match status" value="1"/>
</dbReference>
<dbReference type="NCBIfam" id="TIGR00231">
    <property type="entry name" value="small_GTP"/>
    <property type="match status" value="1"/>
</dbReference>
<dbReference type="PANTHER" id="PTHR42714">
    <property type="entry name" value="TRNA MODIFICATION GTPASE GTPBP3"/>
    <property type="match status" value="1"/>
</dbReference>
<dbReference type="PANTHER" id="PTHR42714:SF2">
    <property type="entry name" value="TRNA MODIFICATION GTPASE GTPBP3, MITOCHONDRIAL"/>
    <property type="match status" value="1"/>
</dbReference>
<dbReference type="Pfam" id="PF01926">
    <property type="entry name" value="MMR_HSR1"/>
    <property type="match status" value="1"/>
</dbReference>
<dbReference type="Pfam" id="PF12631">
    <property type="entry name" value="MnmE_helical"/>
    <property type="match status" value="1"/>
</dbReference>
<dbReference type="Pfam" id="PF10396">
    <property type="entry name" value="TrmE_N"/>
    <property type="match status" value="1"/>
</dbReference>
<dbReference type="PRINTS" id="PR00449">
    <property type="entry name" value="RASTRNSFRMNG"/>
</dbReference>
<dbReference type="SUPFAM" id="SSF52540">
    <property type="entry name" value="P-loop containing nucleoside triphosphate hydrolases"/>
    <property type="match status" value="1"/>
</dbReference>
<dbReference type="SUPFAM" id="SSF116878">
    <property type="entry name" value="TrmE connector domain"/>
    <property type="match status" value="1"/>
</dbReference>
<dbReference type="PROSITE" id="PS51709">
    <property type="entry name" value="G_TRME"/>
    <property type="match status" value="1"/>
</dbReference>
<organism>
    <name type="scientific">Rhizobium johnstonii (strain DSM 114642 / LMG 32736 / 3841)</name>
    <name type="common">Rhizobium leguminosarum bv. viciae</name>
    <dbReference type="NCBI Taxonomy" id="216596"/>
    <lineage>
        <taxon>Bacteria</taxon>
        <taxon>Pseudomonadati</taxon>
        <taxon>Pseudomonadota</taxon>
        <taxon>Alphaproteobacteria</taxon>
        <taxon>Hyphomicrobiales</taxon>
        <taxon>Rhizobiaceae</taxon>
        <taxon>Rhizobium/Agrobacterium group</taxon>
        <taxon>Rhizobium</taxon>
        <taxon>Rhizobium johnstonii</taxon>
    </lineage>
</organism>
<accession>Q1MA18</accession>
<gene>
    <name evidence="1" type="primary">mnmE</name>
    <name evidence="1" type="synonym">trmE</name>
    <name type="ordered locus">RL4739</name>
</gene>
<keyword id="KW-0963">Cytoplasm</keyword>
<keyword id="KW-0342">GTP-binding</keyword>
<keyword id="KW-0378">Hydrolase</keyword>
<keyword id="KW-0460">Magnesium</keyword>
<keyword id="KW-0479">Metal-binding</keyword>
<keyword id="KW-0547">Nucleotide-binding</keyword>
<keyword id="KW-0630">Potassium</keyword>
<keyword id="KW-0819">tRNA processing</keyword>